<proteinExistence type="inferred from homology"/>
<reference key="1">
    <citation type="journal article" date="2005" name="Nature">
        <title>The genome sequence of the rice blast fungus Magnaporthe grisea.</title>
        <authorList>
            <person name="Dean R.A."/>
            <person name="Talbot N.J."/>
            <person name="Ebbole D.J."/>
            <person name="Farman M.L."/>
            <person name="Mitchell T.K."/>
            <person name="Orbach M.J."/>
            <person name="Thon M.R."/>
            <person name="Kulkarni R."/>
            <person name="Xu J.-R."/>
            <person name="Pan H."/>
            <person name="Read N.D."/>
            <person name="Lee Y.-H."/>
            <person name="Carbone I."/>
            <person name="Brown D."/>
            <person name="Oh Y.Y."/>
            <person name="Donofrio N."/>
            <person name="Jeong J.S."/>
            <person name="Soanes D.M."/>
            <person name="Djonovic S."/>
            <person name="Kolomiets E."/>
            <person name="Rehmeyer C."/>
            <person name="Li W."/>
            <person name="Harding M."/>
            <person name="Kim S."/>
            <person name="Lebrun M.-H."/>
            <person name="Bohnert H."/>
            <person name="Coughlan S."/>
            <person name="Butler J."/>
            <person name="Calvo S.E."/>
            <person name="Ma L.-J."/>
            <person name="Nicol R."/>
            <person name="Purcell S."/>
            <person name="Nusbaum C."/>
            <person name="Galagan J.E."/>
            <person name="Birren B.W."/>
        </authorList>
    </citation>
    <scope>NUCLEOTIDE SEQUENCE [LARGE SCALE GENOMIC DNA]</scope>
    <source>
        <strain>70-15 / ATCC MYA-4617 / FGSC 8958</strain>
    </source>
</reference>
<gene>
    <name evidence="1" type="primary">GUF1</name>
    <name type="ORF">MGG_04686</name>
</gene>
<evidence type="ECO:0000255" key="1">
    <source>
        <dbReference type="HAMAP-Rule" id="MF_03137"/>
    </source>
</evidence>
<evidence type="ECO:0000256" key="2">
    <source>
        <dbReference type="SAM" id="MobiDB-lite"/>
    </source>
</evidence>
<evidence type="ECO:0000305" key="3"/>
<organism>
    <name type="scientific">Pyricularia oryzae (strain 70-15 / ATCC MYA-4617 / FGSC 8958)</name>
    <name type="common">Rice blast fungus</name>
    <name type="synonym">Magnaporthe oryzae</name>
    <dbReference type="NCBI Taxonomy" id="242507"/>
    <lineage>
        <taxon>Eukaryota</taxon>
        <taxon>Fungi</taxon>
        <taxon>Dikarya</taxon>
        <taxon>Ascomycota</taxon>
        <taxon>Pezizomycotina</taxon>
        <taxon>Sordariomycetes</taxon>
        <taxon>Sordariomycetidae</taxon>
        <taxon>Magnaporthales</taxon>
        <taxon>Pyriculariaceae</taxon>
        <taxon>Pyricularia</taxon>
    </lineage>
</organism>
<accession>A4QV78</accession>
<accession>G4MRA9</accession>
<protein>
    <recommendedName>
        <fullName evidence="1">Translation factor GUF1, mitochondrial</fullName>
        <ecNumber>3.6.5.-</ecNumber>
    </recommendedName>
    <alternativeName>
        <fullName evidence="1">Elongation factor 4 homolog</fullName>
        <shortName evidence="1">EF-4</shortName>
    </alternativeName>
    <alternativeName>
        <fullName evidence="1">GTPase GUF1</fullName>
    </alternativeName>
    <alternativeName>
        <fullName evidence="1">Ribosomal back-translocase</fullName>
    </alternativeName>
</protein>
<name>GUF1_PYRO7</name>
<sequence length="701" mass="78126">MSCCKGLTPQCVRVRLPRRPALSHPARLYSSSSSSNSHSSPSRPRLLSRPQPHNAILHLPRPNLGSGRYDRIPQARSSHHSSAPMTDLEQRIAAIPIERYRNFCVIAHVDHGKSTLSDRLLELTGTISASDENKQILDKLDVERERGITVKAQTCTMLYRYRGEDYLLHLVDTPGHVDFRAEVTRSYASCGGALLLVDASQGVQAQTVANFYLAFAEGLTLVPVVNKIDLPTADPERALKQLRDTFELDVNEDGTGAVLVSAKAGTNVEKVLPAVIEQIPHPTGDPNAPLRLLLVDSWYDTFRGVVLLVRIFNGTVRPGDNVVSLATGNRYTVGEVGIQYPHPTPQTALRPGQVGYLSFSPGMKRIQDAKIGDTFTFQGSEAVVEPYPGFEEPKPMVFVAAFPTDQSDYQRLADSITQLTLNDRSVTLQKDFSEALGAGWRLGFLGSLHCSVFQDRLRQEHGASIMLTEPAVPTKVQWRDGKSTIITNPTQFPDQSEYHGKIEGFYEPFVAATIAVPEEYLGRIIKLCEDSRGEQESIEFFGAQQVIVKYALPSMALVDDLFGKLKGASRGYATLDYEDAGWRRSELVKLNLLVNKVPVDAICRVVHTSQVERLGRKWVTKFKEHVDRQMFEVVIQAAVGKRIIARETIKPFRKDVTAKLHAADPSRRRKLLEKQKEGRKKLRAIGNVTIEHSSFQKFLER</sequence>
<comment type="function">
    <text evidence="1">Promotes mitochondrial protein synthesis. May act as a fidelity factor of the translation reaction, by catalyzing a one-codon backward translocation of tRNAs on improperly translocated ribosomes. Binds to mitochondrial ribosomes in a GTP-dependent manner.</text>
</comment>
<comment type="catalytic activity">
    <reaction evidence="1">
        <text>GTP + H2O = GDP + phosphate + H(+)</text>
        <dbReference type="Rhea" id="RHEA:19669"/>
        <dbReference type="ChEBI" id="CHEBI:15377"/>
        <dbReference type="ChEBI" id="CHEBI:15378"/>
        <dbReference type="ChEBI" id="CHEBI:37565"/>
        <dbReference type="ChEBI" id="CHEBI:43474"/>
        <dbReference type="ChEBI" id="CHEBI:58189"/>
    </reaction>
</comment>
<comment type="subcellular location">
    <subcellularLocation>
        <location evidence="1">Mitochondrion inner membrane</location>
        <topology evidence="1">Peripheral membrane protein</topology>
        <orientation evidence="1">Matrix side</orientation>
    </subcellularLocation>
</comment>
<comment type="similarity">
    <text evidence="3">Belongs to the TRAFAC class translation factor GTPase superfamily. Classic translation factor GTPase family. LepA subfamily.</text>
</comment>
<dbReference type="EC" id="3.6.5.-"/>
<dbReference type="EMBL" id="CM001231">
    <property type="protein sequence ID" value="EHA58234.1"/>
    <property type="molecule type" value="Genomic_DNA"/>
</dbReference>
<dbReference type="RefSeq" id="XP_003710846.1">
    <property type="nucleotide sequence ID" value="XM_003710798.1"/>
</dbReference>
<dbReference type="SMR" id="A4QV78"/>
<dbReference type="FunCoup" id="A4QV78">
    <property type="interactions" value="718"/>
</dbReference>
<dbReference type="STRING" id="242507.A4QV78"/>
<dbReference type="EnsemblFungi" id="MGG_04686T0">
    <property type="protein sequence ID" value="MGG_04686T0"/>
    <property type="gene ID" value="MGG_04686"/>
</dbReference>
<dbReference type="GeneID" id="2678184"/>
<dbReference type="KEGG" id="mgr:MGG_04686"/>
<dbReference type="VEuPathDB" id="FungiDB:MGG_04686"/>
<dbReference type="eggNOG" id="KOG0462">
    <property type="taxonomic scope" value="Eukaryota"/>
</dbReference>
<dbReference type="HOGENOM" id="CLU_009995_3_1_1"/>
<dbReference type="InParanoid" id="A4QV78"/>
<dbReference type="OMA" id="QVKCDEN"/>
<dbReference type="OrthoDB" id="1074at2759"/>
<dbReference type="Proteomes" id="UP000009058">
    <property type="component" value="Chromosome 1"/>
</dbReference>
<dbReference type="GO" id="GO:0005743">
    <property type="term" value="C:mitochondrial inner membrane"/>
    <property type="evidence" value="ECO:0007669"/>
    <property type="project" value="UniProtKB-SubCell"/>
</dbReference>
<dbReference type="GO" id="GO:0005759">
    <property type="term" value="C:mitochondrial matrix"/>
    <property type="evidence" value="ECO:0007669"/>
    <property type="project" value="UniProtKB-UniRule"/>
</dbReference>
<dbReference type="GO" id="GO:0005525">
    <property type="term" value="F:GTP binding"/>
    <property type="evidence" value="ECO:0007669"/>
    <property type="project" value="UniProtKB-UniRule"/>
</dbReference>
<dbReference type="GO" id="GO:0003924">
    <property type="term" value="F:GTPase activity"/>
    <property type="evidence" value="ECO:0007669"/>
    <property type="project" value="UniProtKB-UniRule"/>
</dbReference>
<dbReference type="GO" id="GO:0097177">
    <property type="term" value="F:mitochondrial ribosome binding"/>
    <property type="evidence" value="ECO:0007669"/>
    <property type="project" value="EnsemblFungi"/>
</dbReference>
<dbReference type="GO" id="GO:0045727">
    <property type="term" value="P:positive regulation of translation"/>
    <property type="evidence" value="ECO:0007669"/>
    <property type="project" value="UniProtKB-UniRule"/>
</dbReference>
<dbReference type="GO" id="GO:0006412">
    <property type="term" value="P:translation"/>
    <property type="evidence" value="ECO:0007669"/>
    <property type="project" value="UniProtKB-KW"/>
</dbReference>
<dbReference type="CDD" id="cd03699">
    <property type="entry name" value="EF4_II"/>
    <property type="match status" value="1"/>
</dbReference>
<dbReference type="CDD" id="cd01890">
    <property type="entry name" value="LepA"/>
    <property type="match status" value="1"/>
</dbReference>
<dbReference type="CDD" id="cd03709">
    <property type="entry name" value="lepA_C"/>
    <property type="match status" value="1"/>
</dbReference>
<dbReference type="FunFam" id="3.40.50.300:FF:000078">
    <property type="entry name" value="Elongation factor 4"/>
    <property type="match status" value="1"/>
</dbReference>
<dbReference type="FunFam" id="2.40.30.10:FF:000015">
    <property type="entry name" value="Translation factor GUF1, mitochondrial"/>
    <property type="match status" value="1"/>
</dbReference>
<dbReference type="FunFam" id="3.30.70.240:FF:000007">
    <property type="entry name" value="Translation factor GUF1, mitochondrial"/>
    <property type="match status" value="1"/>
</dbReference>
<dbReference type="FunFam" id="3.30.70.2570:FF:000001">
    <property type="entry name" value="Translation factor GUF1, mitochondrial"/>
    <property type="match status" value="1"/>
</dbReference>
<dbReference type="FunFam" id="3.30.70.870:FF:000004">
    <property type="entry name" value="Translation factor GUF1, mitochondrial"/>
    <property type="match status" value="1"/>
</dbReference>
<dbReference type="Gene3D" id="3.30.70.240">
    <property type="match status" value="1"/>
</dbReference>
<dbReference type="Gene3D" id="3.30.70.2570">
    <property type="entry name" value="Elongation factor 4, C-terminal domain"/>
    <property type="match status" value="1"/>
</dbReference>
<dbReference type="Gene3D" id="3.30.70.870">
    <property type="entry name" value="Elongation Factor G (Translational Gtpase), domain 3"/>
    <property type="match status" value="1"/>
</dbReference>
<dbReference type="Gene3D" id="3.40.50.300">
    <property type="entry name" value="P-loop containing nucleotide triphosphate hydrolases"/>
    <property type="match status" value="1"/>
</dbReference>
<dbReference type="Gene3D" id="2.40.30.10">
    <property type="entry name" value="Translation factors"/>
    <property type="match status" value="1"/>
</dbReference>
<dbReference type="HAMAP" id="MF_00071">
    <property type="entry name" value="LepA"/>
    <property type="match status" value="1"/>
</dbReference>
<dbReference type="InterPro" id="IPR006297">
    <property type="entry name" value="EF-4"/>
</dbReference>
<dbReference type="InterPro" id="IPR035647">
    <property type="entry name" value="EFG_III/V"/>
</dbReference>
<dbReference type="InterPro" id="IPR000640">
    <property type="entry name" value="EFG_V-like"/>
</dbReference>
<dbReference type="InterPro" id="IPR004161">
    <property type="entry name" value="EFTu-like_2"/>
</dbReference>
<dbReference type="InterPro" id="IPR031157">
    <property type="entry name" value="G_TR_CS"/>
</dbReference>
<dbReference type="InterPro" id="IPR038363">
    <property type="entry name" value="LepA_C_sf"/>
</dbReference>
<dbReference type="InterPro" id="IPR013842">
    <property type="entry name" value="LepA_CTD"/>
</dbReference>
<dbReference type="InterPro" id="IPR035654">
    <property type="entry name" value="LepA_IV"/>
</dbReference>
<dbReference type="InterPro" id="IPR027417">
    <property type="entry name" value="P-loop_NTPase"/>
</dbReference>
<dbReference type="InterPro" id="IPR005225">
    <property type="entry name" value="Small_GTP-bd"/>
</dbReference>
<dbReference type="InterPro" id="IPR000795">
    <property type="entry name" value="T_Tr_GTP-bd_dom"/>
</dbReference>
<dbReference type="InterPro" id="IPR009000">
    <property type="entry name" value="Transl_B-barrel_sf"/>
</dbReference>
<dbReference type="NCBIfam" id="TIGR01393">
    <property type="entry name" value="lepA"/>
    <property type="match status" value="1"/>
</dbReference>
<dbReference type="NCBIfam" id="TIGR00231">
    <property type="entry name" value="small_GTP"/>
    <property type="match status" value="1"/>
</dbReference>
<dbReference type="PANTHER" id="PTHR43512:SF7">
    <property type="entry name" value="TRANSLATION FACTOR GUF1, MITOCHONDRIAL"/>
    <property type="match status" value="1"/>
</dbReference>
<dbReference type="PANTHER" id="PTHR43512">
    <property type="entry name" value="TRANSLATION FACTOR GUF1-RELATED"/>
    <property type="match status" value="1"/>
</dbReference>
<dbReference type="Pfam" id="PF00679">
    <property type="entry name" value="EFG_C"/>
    <property type="match status" value="1"/>
</dbReference>
<dbReference type="Pfam" id="PF00009">
    <property type="entry name" value="GTP_EFTU"/>
    <property type="match status" value="1"/>
</dbReference>
<dbReference type="Pfam" id="PF03144">
    <property type="entry name" value="GTP_EFTU_D2"/>
    <property type="match status" value="1"/>
</dbReference>
<dbReference type="Pfam" id="PF06421">
    <property type="entry name" value="LepA_C"/>
    <property type="match status" value="1"/>
</dbReference>
<dbReference type="PRINTS" id="PR00315">
    <property type="entry name" value="ELONGATNFCT"/>
</dbReference>
<dbReference type="SUPFAM" id="SSF54980">
    <property type="entry name" value="EF-G C-terminal domain-like"/>
    <property type="match status" value="2"/>
</dbReference>
<dbReference type="SUPFAM" id="SSF52540">
    <property type="entry name" value="P-loop containing nucleoside triphosphate hydrolases"/>
    <property type="match status" value="1"/>
</dbReference>
<dbReference type="SUPFAM" id="SSF50447">
    <property type="entry name" value="Translation proteins"/>
    <property type="match status" value="1"/>
</dbReference>
<dbReference type="PROSITE" id="PS00301">
    <property type="entry name" value="G_TR_1"/>
    <property type="match status" value="1"/>
</dbReference>
<dbReference type="PROSITE" id="PS51722">
    <property type="entry name" value="G_TR_2"/>
    <property type="match status" value="1"/>
</dbReference>
<feature type="transit peptide" description="Mitochondrion" evidence="1">
    <location>
        <begin position="1"/>
        <end position="29"/>
    </location>
</feature>
<feature type="chain" id="PRO_0000402890" description="Translation factor GUF1, mitochondrial">
    <location>
        <begin position="30"/>
        <end position="701"/>
    </location>
</feature>
<feature type="domain" description="tr-type G">
    <location>
        <begin position="98"/>
        <end position="283"/>
    </location>
</feature>
<feature type="region of interest" description="Disordered" evidence="2">
    <location>
        <begin position="23"/>
        <end position="85"/>
    </location>
</feature>
<feature type="compositionally biased region" description="Low complexity" evidence="2">
    <location>
        <begin position="23"/>
        <end position="50"/>
    </location>
</feature>
<feature type="binding site" evidence="1">
    <location>
        <begin position="107"/>
        <end position="114"/>
    </location>
    <ligand>
        <name>GTP</name>
        <dbReference type="ChEBI" id="CHEBI:37565"/>
    </ligand>
</feature>
<feature type="binding site" evidence="1">
    <location>
        <begin position="172"/>
        <end position="176"/>
    </location>
    <ligand>
        <name>GTP</name>
        <dbReference type="ChEBI" id="CHEBI:37565"/>
    </ligand>
</feature>
<feature type="binding site" evidence="1">
    <location>
        <begin position="226"/>
        <end position="229"/>
    </location>
    <ligand>
        <name>GTP</name>
        <dbReference type="ChEBI" id="CHEBI:37565"/>
    </ligand>
</feature>
<keyword id="KW-0342">GTP-binding</keyword>
<keyword id="KW-0378">Hydrolase</keyword>
<keyword id="KW-0472">Membrane</keyword>
<keyword id="KW-0496">Mitochondrion</keyword>
<keyword id="KW-0999">Mitochondrion inner membrane</keyword>
<keyword id="KW-0547">Nucleotide-binding</keyword>
<keyword id="KW-0648">Protein biosynthesis</keyword>
<keyword id="KW-1185">Reference proteome</keyword>
<keyword id="KW-0809">Transit peptide</keyword>